<evidence type="ECO:0000255" key="1">
    <source>
        <dbReference type="HAMAP-Rule" id="MF_01582"/>
    </source>
</evidence>
<feature type="chain" id="PRO_0000309090" description="Serine/threonine transporter SstT">
    <location>
        <begin position="1"/>
        <end position="410"/>
    </location>
</feature>
<feature type="transmembrane region" description="Helical" evidence="1">
    <location>
        <begin position="11"/>
        <end position="31"/>
    </location>
</feature>
<feature type="transmembrane region" description="Helical" evidence="1">
    <location>
        <begin position="45"/>
        <end position="65"/>
    </location>
</feature>
<feature type="transmembrane region" description="Helical" evidence="1">
    <location>
        <begin position="79"/>
        <end position="99"/>
    </location>
</feature>
<feature type="transmembrane region" description="Helical" evidence="1">
    <location>
        <begin position="138"/>
        <end position="158"/>
    </location>
</feature>
<feature type="transmembrane region" description="Helical" evidence="1">
    <location>
        <begin position="179"/>
        <end position="199"/>
    </location>
</feature>
<feature type="transmembrane region" description="Helical" evidence="1">
    <location>
        <begin position="214"/>
        <end position="234"/>
    </location>
</feature>
<feature type="transmembrane region" description="Helical" evidence="1">
    <location>
        <begin position="285"/>
        <end position="305"/>
    </location>
</feature>
<feature type="transmembrane region" description="Helical" evidence="1">
    <location>
        <begin position="327"/>
        <end position="347"/>
    </location>
</feature>
<feature type="transmembrane region" description="Helical" evidence="1">
    <location>
        <begin position="353"/>
        <end position="373"/>
    </location>
</feature>
<organism>
    <name type="scientific">Geobacillus thermodenitrificans (strain NG80-2)</name>
    <dbReference type="NCBI Taxonomy" id="420246"/>
    <lineage>
        <taxon>Bacteria</taxon>
        <taxon>Bacillati</taxon>
        <taxon>Bacillota</taxon>
        <taxon>Bacilli</taxon>
        <taxon>Bacillales</taxon>
        <taxon>Anoxybacillaceae</taxon>
        <taxon>Geobacillus</taxon>
    </lineage>
</organism>
<protein>
    <recommendedName>
        <fullName evidence="1">Serine/threonine transporter SstT</fullName>
    </recommendedName>
    <alternativeName>
        <fullName evidence="1">Na(+)/serine-threonine symporter</fullName>
    </alternativeName>
</protein>
<name>SSTT_GEOTN</name>
<reference key="1">
    <citation type="journal article" date="2007" name="Proc. Natl. Acad. Sci. U.S.A.">
        <title>Genome and proteome of long-chain alkane degrading Geobacillus thermodenitrificans NG80-2 isolated from a deep-subsurface oil reservoir.</title>
        <authorList>
            <person name="Feng L."/>
            <person name="Wang W."/>
            <person name="Cheng J."/>
            <person name="Ren Y."/>
            <person name="Zhao G."/>
            <person name="Gao C."/>
            <person name="Tang Y."/>
            <person name="Liu X."/>
            <person name="Han W."/>
            <person name="Peng X."/>
            <person name="Liu R."/>
            <person name="Wang L."/>
        </authorList>
    </citation>
    <scope>NUCLEOTIDE SEQUENCE [LARGE SCALE GENOMIC DNA]</scope>
    <source>
        <strain>NG80-2</strain>
    </source>
</reference>
<dbReference type="EMBL" id="CP000557">
    <property type="protein sequence ID" value="ABO65699.1"/>
    <property type="molecule type" value="Genomic_DNA"/>
</dbReference>
<dbReference type="RefSeq" id="WP_008881301.1">
    <property type="nucleotide sequence ID" value="NC_009328.1"/>
</dbReference>
<dbReference type="SMR" id="A4IK45"/>
<dbReference type="GeneID" id="87622074"/>
<dbReference type="KEGG" id="gtn:GTNG_0317"/>
<dbReference type="eggNOG" id="COG3633">
    <property type="taxonomic scope" value="Bacteria"/>
</dbReference>
<dbReference type="HOGENOM" id="CLU_044581_0_0_9"/>
<dbReference type="Proteomes" id="UP000001578">
    <property type="component" value="Chromosome"/>
</dbReference>
<dbReference type="GO" id="GO:0005886">
    <property type="term" value="C:plasma membrane"/>
    <property type="evidence" value="ECO:0007669"/>
    <property type="project" value="UniProtKB-SubCell"/>
</dbReference>
<dbReference type="GO" id="GO:0005295">
    <property type="term" value="F:neutral L-amino acid:sodium symporter activity"/>
    <property type="evidence" value="ECO:0007669"/>
    <property type="project" value="TreeGrafter"/>
</dbReference>
<dbReference type="GO" id="GO:0032329">
    <property type="term" value="P:serine transport"/>
    <property type="evidence" value="ECO:0007669"/>
    <property type="project" value="InterPro"/>
</dbReference>
<dbReference type="GO" id="GO:0015826">
    <property type="term" value="P:threonine transport"/>
    <property type="evidence" value="ECO:0007669"/>
    <property type="project" value="InterPro"/>
</dbReference>
<dbReference type="FunFam" id="1.10.3860.10:FF:000003">
    <property type="entry name" value="Serine/threonine transporter sstT"/>
    <property type="match status" value="1"/>
</dbReference>
<dbReference type="Gene3D" id="1.10.3860.10">
    <property type="entry name" value="Sodium:dicarboxylate symporter"/>
    <property type="match status" value="1"/>
</dbReference>
<dbReference type="HAMAP" id="MF_01582">
    <property type="entry name" value="Ser_Thr_transp_SstT"/>
    <property type="match status" value="1"/>
</dbReference>
<dbReference type="InterPro" id="IPR001991">
    <property type="entry name" value="Na-dicarboxylate_symporter"/>
</dbReference>
<dbReference type="InterPro" id="IPR036458">
    <property type="entry name" value="Na:dicarbo_symporter_sf"/>
</dbReference>
<dbReference type="InterPro" id="IPR023025">
    <property type="entry name" value="Ser_Thr_transp_SstT"/>
</dbReference>
<dbReference type="NCBIfam" id="NF010151">
    <property type="entry name" value="PRK13628.1"/>
    <property type="match status" value="1"/>
</dbReference>
<dbReference type="PANTHER" id="PTHR42865">
    <property type="entry name" value="PROTON/GLUTAMATE-ASPARTATE SYMPORTER"/>
    <property type="match status" value="1"/>
</dbReference>
<dbReference type="PANTHER" id="PTHR42865:SF8">
    <property type="entry name" value="SERINE_THREONINE TRANSPORTER SSTT"/>
    <property type="match status" value="1"/>
</dbReference>
<dbReference type="Pfam" id="PF00375">
    <property type="entry name" value="SDF"/>
    <property type="match status" value="1"/>
</dbReference>
<dbReference type="PRINTS" id="PR00173">
    <property type="entry name" value="EDTRNSPORT"/>
</dbReference>
<dbReference type="SUPFAM" id="SSF118215">
    <property type="entry name" value="Proton glutamate symport protein"/>
    <property type="match status" value="1"/>
</dbReference>
<gene>
    <name evidence="1" type="primary">sstT</name>
    <name type="ordered locus">GTNG_0317</name>
</gene>
<proteinExistence type="inferred from homology"/>
<comment type="function">
    <text evidence="1">Involved in the import of serine and threonine into the cell, with the concomitant import of sodium (symport system).</text>
</comment>
<comment type="catalytic activity">
    <reaction evidence="1">
        <text>L-serine(in) + Na(+)(in) = L-serine(out) + Na(+)(out)</text>
        <dbReference type="Rhea" id="RHEA:29575"/>
        <dbReference type="ChEBI" id="CHEBI:29101"/>
        <dbReference type="ChEBI" id="CHEBI:33384"/>
    </reaction>
    <physiologicalReaction direction="right-to-left" evidence="1">
        <dbReference type="Rhea" id="RHEA:29577"/>
    </physiologicalReaction>
</comment>
<comment type="catalytic activity">
    <reaction evidence="1">
        <text>L-threonine(in) + Na(+)(in) = L-threonine(out) + Na(+)(out)</text>
        <dbReference type="Rhea" id="RHEA:69999"/>
        <dbReference type="ChEBI" id="CHEBI:29101"/>
        <dbReference type="ChEBI" id="CHEBI:57926"/>
    </reaction>
    <physiologicalReaction direction="right-to-left" evidence="1">
        <dbReference type="Rhea" id="RHEA:70001"/>
    </physiologicalReaction>
</comment>
<comment type="subcellular location">
    <subcellularLocation>
        <location evidence="1">Cell membrane</location>
        <topology evidence="1">Multi-pass membrane protein</topology>
    </subcellularLocation>
</comment>
<comment type="similarity">
    <text evidence="1">Belongs to the dicarboxylate/amino acid:cation symporter (DAACS) (TC 2.A.23) family.</text>
</comment>
<sequence>MKQLIAKWNRVSLVKRIIIGIIIGITLAVTVPESTKWISIFGSLFVGALKAVAPVLVFFLVISAISRHQSGQKTNIQHILILYGFSTFLASLTAVVASFLFPVHLSLTESAKEVSPPSNITEVIQSLLFNIVDNPVHALLNANYIGILTWAVLLGIALRTAPETTKNVIAHFSDAISQIVTWVINFAPIGIMGLVFDAIVTNGLSALIDYGKLLAVLLGTMCFVAFVMNPLIVFLNIRQNPYPLVWRCIRESGVTAFFTRSSAANIPVNLRLSEMLGLNKNTYSISIPLGATINMAGAAVTISVLTLAAVHTLEIEVDLGTALILSVLSAIAAAGASGVAGGSLLLIPLACSLFGIPNDIAMQVVGVGFIIGVLQDSCETALNSSSDVLFTATAEYAKRRKEGKQVAIKA</sequence>
<accession>A4IK45</accession>
<keyword id="KW-0029">Amino-acid transport</keyword>
<keyword id="KW-1003">Cell membrane</keyword>
<keyword id="KW-0472">Membrane</keyword>
<keyword id="KW-0769">Symport</keyword>
<keyword id="KW-0812">Transmembrane</keyword>
<keyword id="KW-1133">Transmembrane helix</keyword>
<keyword id="KW-0813">Transport</keyword>